<keyword id="KW-1003">Cell membrane</keyword>
<keyword id="KW-0966">Cell projection</keyword>
<keyword id="KW-1015">Disulfide bond</keyword>
<keyword id="KW-0256">Endoplasmic reticulum</keyword>
<keyword id="KW-0297">G-protein coupled receptor</keyword>
<keyword id="KW-0325">Glycoprotein</keyword>
<keyword id="KW-0449">Lipoprotein</keyword>
<keyword id="KW-0472">Membrane</keyword>
<keyword id="KW-0564">Palmitate</keyword>
<keyword id="KW-0675">Receptor</keyword>
<keyword id="KW-1185">Reference proteome</keyword>
<keyword id="KW-0770">Synapse</keyword>
<keyword id="KW-0807">Transducer</keyword>
<keyword id="KW-0812">Transmembrane</keyword>
<keyword id="KW-1133">Transmembrane helix</keyword>
<accession>Q95136</accession>
<accession>A4IFG9</accession>
<accession>Q8WND7</accession>
<dbReference type="EMBL" id="AF381032">
    <property type="protein sequence ID" value="AAL37945.1"/>
    <property type="molecule type" value="mRNA"/>
</dbReference>
<dbReference type="EMBL" id="BC134576">
    <property type="protein sequence ID" value="AAI34577.1"/>
    <property type="molecule type" value="mRNA"/>
</dbReference>
<dbReference type="EMBL" id="U73042">
    <property type="protein sequence ID" value="AAB17281.1"/>
    <property type="molecule type" value="Genomic_DNA"/>
</dbReference>
<dbReference type="RefSeq" id="NP_776467.1">
    <property type="nucleotide sequence ID" value="NM_174042.2"/>
</dbReference>
<dbReference type="RefSeq" id="XP_005211234.1">
    <property type="nucleotide sequence ID" value="XM_005211177.5"/>
</dbReference>
<dbReference type="RefSeq" id="XP_005211235.1">
    <property type="nucleotide sequence ID" value="XM_005211178.3"/>
</dbReference>
<dbReference type="SMR" id="Q95136"/>
<dbReference type="FunCoup" id="Q95136">
    <property type="interactions" value="921"/>
</dbReference>
<dbReference type="STRING" id="9913.ENSBTAP00000054107"/>
<dbReference type="BindingDB" id="Q95136"/>
<dbReference type="ChEMBL" id="CHEMBL2967"/>
<dbReference type="DrugCentral" id="Q95136"/>
<dbReference type="GlyCosmos" id="Q95136">
    <property type="glycosylation" value="2 sites, No reported glycans"/>
</dbReference>
<dbReference type="GlyGen" id="Q95136">
    <property type="glycosylation" value="2 sites"/>
</dbReference>
<dbReference type="PaxDb" id="9913-ENSBTAP00000054107"/>
<dbReference type="Ensembl" id="ENSBTAT00000062955.3">
    <property type="protein sequence ID" value="ENSBTAP00000054107.1"/>
    <property type="gene ID" value="ENSBTAG00000047719.3"/>
</dbReference>
<dbReference type="GeneID" id="281125"/>
<dbReference type="KEGG" id="bta:281125"/>
<dbReference type="CTD" id="1812"/>
<dbReference type="VEuPathDB" id="HostDB:ENSBTAG00000047719"/>
<dbReference type="VGNC" id="VGNC:28207">
    <property type="gene designation" value="DRD1"/>
</dbReference>
<dbReference type="eggNOG" id="KOG3656">
    <property type="taxonomic scope" value="Eukaryota"/>
</dbReference>
<dbReference type="GeneTree" id="ENSGT00940000155857"/>
<dbReference type="HOGENOM" id="CLU_009579_11_0_1"/>
<dbReference type="InParanoid" id="Q95136"/>
<dbReference type="OMA" id="THNGQHP"/>
<dbReference type="OrthoDB" id="6021915at2759"/>
<dbReference type="TreeFam" id="TF325181"/>
<dbReference type="Reactome" id="R-BTA-390651">
    <property type="pathway name" value="Dopamine receptors"/>
</dbReference>
<dbReference type="Reactome" id="R-BTA-418555">
    <property type="pathway name" value="G alpha (s) signalling events"/>
</dbReference>
<dbReference type="PRO" id="PR:Q95136"/>
<dbReference type="Proteomes" id="UP000009136">
    <property type="component" value="Chromosome 10"/>
</dbReference>
<dbReference type="Bgee" id="ENSBTAG00000047719">
    <property type="expression patterns" value="Expressed in retina and 23 other cell types or tissues"/>
</dbReference>
<dbReference type="GO" id="GO:0060170">
    <property type="term" value="C:ciliary membrane"/>
    <property type="evidence" value="ECO:0007669"/>
    <property type="project" value="UniProtKB-SubCell"/>
</dbReference>
<dbReference type="GO" id="GO:0043197">
    <property type="term" value="C:dendritic spine"/>
    <property type="evidence" value="ECO:0000250"/>
    <property type="project" value="UniProtKB"/>
</dbReference>
<dbReference type="GO" id="GO:0005789">
    <property type="term" value="C:endoplasmic reticulum membrane"/>
    <property type="evidence" value="ECO:0007669"/>
    <property type="project" value="UniProtKB-SubCell"/>
</dbReference>
<dbReference type="GO" id="GO:0005886">
    <property type="term" value="C:plasma membrane"/>
    <property type="evidence" value="ECO:0000318"/>
    <property type="project" value="GO_Central"/>
</dbReference>
<dbReference type="GO" id="GO:0001588">
    <property type="term" value="F:dopamine neurotransmitter receptor activity, coupled via Gs"/>
    <property type="evidence" value="ECO:0000318"/>
    <property type="project" value="GO_Central"/>
</dbReference>
<dbReference type="GO" id="GO:0004930">
    <property type="term" value="F:G protein-coupled receptor activity"/>
    <property type="evidence" value="ECO:0000318"/>
    <property type="project" value="GO_Central"/>
</dbReference>
<dbReference type="GO" id="GO:0071880">
    <property type="term" value="P:adenylate cyclase-activating adrenergic receptor signaling pathway"/>
    <property type="evidence" value="ECO:0000318"/>
    <property type="project" value="GO_Central"/>
</dbReference>
<dbReference type="GO" id="GO:0007212">
    <property type="term" value="P:G protein-coupled dopamine receptor signaling pathway"/>
    <property type="evidence" value="ECO:0000318"/>
    <property type="project" value="GO_Central"/>
</dbReference>
<dbReference type="GO" id="GO:0043410">
    <property type="term" value="P:positive regulation of MAPK cascade"/>
    <property type="evidence" value="ECO:0000318"/>
    <property type="project" value="GO_Central"/>
</dbReference>
<dbReference type="GO" id="GO:0042311">
    <property type="term" value="P:vasodilation"/>
    <property type="evidence" value="ECO:0007669"/>
    <property type="project" value="InterPro"/>
</dbReference>
<dbReference type="CDD" id="cd15320">
    <property type="entry name" value="7tmA_D1A_dopamine_R"/>
    <property type="match status" value="1"/>
</dbReference>
<dbReference type="FunFam" id="1.20.1070.10:FF:000045">
    <property type="entry name" value="D(1A) dopamine receptor"/>
    <property type="match status" value="1"/>
</dbReference>
<dbReference type="Gene3D" id="1.20.1070.10">
    <property type="entry name" value="Rhodopsin 7-helix transmembrane proteins"/>
    <property type="match status" value="1"/>
</dbReference>
<dbReference type="InterPro" id="IPR001413">
    <property type="entry name" value="Dopamine_D1_rcpt"/>
</dbReference>
<dbReference type="InterPro" id="IPR000929">
    <property type="entry name" value="Dopamine_rcpt"/>
</dbReference>
<dbReference type="InterPro" id="IPR000276">
    <property type="entry name" value="GPCR_Rhodpsn"/>
</dbReference>
<dbReference type="InterPro" id="IPR017452">
    <property type="entry name" value="GPCR_Rhodpsn_7TM"/>
</dbReference>
<dbReference type="PANTHER" id="PTHR24248">
    <property type="entry name" value="ADRENERGIC RECEPTOR-RELATED G-PROTEIN COUPLED RECEPTOR"/>
    <property type="match status" value="1"/>
</dbReference>
<dbReference type="PANTHER" id="PTHR24248:SF139">
    <property type="entry name" value="D(1A) DOPAMINE RECEPTOR"/>
    <property type="match status" value="1"/>
</dbReference>
<dbReference type="Pfam" id="PF00001">
    <property type="entry name" value="7tm_1"/>
    <property type="match status" value="1"/>
</dbReference>
<dbReference type="PRINTS" id="PR00565">
    <property type="entry name" value="DOPAMINED1AR"/>
</dbReference>
<dbReference type="PRINTS" id="PR00242">
    <property type="entry name" value="DOPAMINER"/>
</dbReference>
<dbReference type="PRINTS" id="PR00237">
    <property type="entry name" value="GPCRRHODOPSN"/>
</dbReference>
<dbReference type="SMART" id="SM01381">
    <property type="entry name" value="7TM_GPCR_Srsx"/>
    <property type="match status" value="1"/>
</dbReference>
<dbReference type="SUPFAM" id="SSF81321">
    <property type="entry name" value="Family A G protein-coupled receptor-like"/>
    <property type="match status" value="1"/>
</dbReference>
<dbReference type="PROSITE" id="PS00237">
    <property type="entry name" value="G_PROTEIN_RECEP_F1_1"/>
    <property type="match status" value="1"/>
</dbReference>
<dbReference type="PROSITE" id="PS50262">
    <property type="entry name" value="G_PROTEIN_RECEP_F1_2"/>
    <property type="match status" value="1"/>
</dbReference>
<reference key="1">
    <citation type="journal article" date="2003" name="Anim. Genet.">
        <title>Characterization and mapping of bovine dopamine receptors 1 and 5.</title>
        <authorList>
            <person name="Haegeman A."/>
            <person name="Williams J.L."/>
            <person name="Law A."/>
            <person name="Van Zeveren A."/>
            <person name="Peelman L.J."/>
        </authorList>
    </citation>
    <scope>NUCLEOTIDE SEQUENCE [MRNA]</scope>
</reference>
<reference key="2">
    <citation type="submission" date="2007-03" db="EMBL/GenBank/DDBJ databases">
        <authorList>
            <consortium name="NIH - Mammalian Gene Collection (MGC) project"/>
        </authorList>
    </citation>
    <scope>NUCLEOTIDE SEQUENCE [LARGE SCALE MRNA]</scope>
    <source>
        <strain>Hereford</strain>
        <tissue>Basal ganglia</tissue>
    </source>
</reference>
<reference key="3">
    <citation type="submission" date="1996-10" db="EMBL/GenBank/DDBJ databases">
        <authorList>
            <person name="Gibert J.-M."/>
            <person name="Botteri C."/>
            <person name="Cardinaud B."/>
            <person name="Vernier P."/>
        </authorList>
    </citation>
    <scope>NUCLEOTIDE SEQUENCE [GENOMIC DNA] OF 110-277</scope>
</reference>
<name>DRD1_BOVIN</name>
<gene>
    <name type="primary">DRD1</name>
    <name type="synonym">D1AR</name>
</gene>
<proteinExistence type="evidence at transcript level"/>
<feature type="chain" id="PRO_0000069371" description="D(1A) dopamine receptor">
    <location>
        <begin position="1"/>
        <end position="446"/>
    </location>
</feature>
<feature type="topological domain" description="Extracellular" evidence="4">
    <location>
        <begin position="1"/>
        <end position="23"/>
    </location>
</feature>
<feature type="transmembrane region" description="Helical; Name=1" evidence="4">
    <location>
        <begin position="24"/>
        <end position="49"/>
    </location>
</feature>
<feature type="topological domain" description="Cytoplasmic" evidence="4">
    <location>
        <begin position="50"/>
        <end position="60"/>
    </location>
</feature>
<feature type="transmembrane region" description="Helical; Name=2" evidence="4">
    <location>
        <begin position="61"/>
        <end position="87"/>
    </location>
</feature>
<feature type="topological domain" description="Extracellular" evidence="4">
    <location>
        <begin position="88"/>
        <end position="96"/>
    </location>
</feature>
<feature type="transmembrane region" description="Helical; Name=3" evidence="4">
    <location>
        <begin position="97"/>
        <end position="119"/>
    </location>
</feature>
<feature type="topological domain" description="Cytoplasmic" evidence="4">
    <location>
        <begin position="120"/>
        <end position="138"/>
    </location>
</feature>
<feature type="transmembrane region" description="Helical; Name=4" evidence="4">
    <location>
        <begin position="139"/>
        <end position="163"/>
    </location>
</feature>
<feature type="topological domain" description="Extracellular" evidence="4">
    <location>
        <begin position="164"/>
        <end position="192"/>
    </location>
</feature>
<feature type="transmembrane region" description="Helical; Name=5" evidence="4">
    <location>
        <begin position="193"/>
        <end position="218"/>
    </location>
</feature>
<feature type="topological domain" description="Cytoplasmic" evidence="4">
    <location>
        <begin position="219"/>
        <end position="272"/>
    </location>
</feature>
<feature type="transmembrane region" description="Helical; Name=6" evidence="4">
    <location>
        <begin position="273"/>
        <end position="299"/>
    </location>
</feature>
<feature type="topological domain" description="Extracellular" evidence="4">
    <location>
        <begin position="300"/>
        <end position="312"/>
    </location>
</feature>
<feature type="transmembrane region" description="Helical; Name=7" evidence="4">
    <location>
        <begin position="313"/>
        <end position="337"/>
    </location>
</feature>
<feature type="topological domain" description="Cytoplasmic" evidence="4">
    <location>
        <begin position="338"/>
        <end position="446"/>
    </location>
</feature>
<feature type="lipid moiety-binding region" description="S-palmitoyl cysteine" evidence="2">
    <location>
        <position position="347"/>
    </location>
</feature>
<feature type="lipid moiety-binding region" description="S-palmitoyl cysteine" evidence="2">
    <location>
        <position position="351"/>
    </location>
</feature>
<feature type="glycosylation site" description="N-linked (GlcNAc...) asparagine" evidence="4">
    <location>
        <position position="5"/>
    </location>
</feature>
<feature type="glycosylation site" description="N-linked (GlcNAc...) asparagine" evidence="4">
    <location>
        <position position="175"/>
    </location>
</feature>
<feature type="disulfide bond" evidence="5">
    <location>
        <begin position="96"/>
        <end position="186"/>
    </location>
</feature>
<comment type="function">
    <text>Dopamine receptor whose activity is mediated by G proteins which activate adenylyl cyclase.</text>
</comment>
<comment type="subunit">
    <text evidence="1 3">Interacts with DNAJC14 via its C-terminus (By similarity). Interacts with DRD2 (By similarity). Interacts with DORIP1 (By similarity).</text>
</comment>
<comment type="subcellular location">
    <subcellularLocation>
        <location evidence="1">Cell membrane</location>
        <topology evidence="1">Multi-pass membrane protein</topology>
    </subcellularLocation>
    <subcellularLocation>
        <location evidence="1">Endoplasmic reticulum membrane</location>
        <topology evidence="1">Multi-pass membrane protein</topology>
    </subcellularLocation>
    <subcellularLocation>
        <location evidence="2">Cell projection</location>
        <location evidence="2">Cilium membrane</location>
        <topology evidence="4">Multi-pass membrane protein</topology>
    </subcellularLocation>
    <subcellularLocation>
        <location evidence="3">Cell projection</location>
        <location evidence="3">Dendrite</location>
    </subcellularLocation>
    <subcellularLocation>
        <location evidence="3">Cell projection</location>
        <location evidence="3">Dendritic spine</location>
    </subcellularLocation>
    <text evidence="1">Transport from the endoplasmic reticulum to the cell surface is regulated by interaction with DNAJC14.</text>
</comment>
<comment type="similarity">
    <text evidence="5">Belongs to the G-protein coupled receptor 1 family.</text>
</comment>
<organism>
    <name type="scientific">Bos taurus</name>
    <name type="common">Bovine</name>
    <dbReference type="NCBI Taxonomy" id="9913"/>
    <lineage>
        <taxon>Eukaryota</taxon>
        <taxon>Metazoa</taxon>
        <taxon>Chordata</taxon>
        <taxon>Craniata</taxon>
        <taxon>Vertebrata</taxon>
        <taxon>Euteleostomi</taxon>
        <taxon>Mammalia</taxon>
        <taxon>Eutheria</taxon>
        <taxon>Laurasiatheria</taxon>
        <taxon>Artiodactyla</taxon>
        <taxon>Ruminantia</taxon>
        <taxon>Pecora</taxon>
        <taxon>Bovidae</taxon>
        <taxon>Bovinae</taxon>
        <taxon>Bos</taxon>
    </lineage>
</organism>
<protein>
    <recommendedName>
        <fullName>D(1A) dopamine receptor</fullName>
    </recommendedName>
    <alternativeName>
        <fullName>Dopamine D1 receptor</fullName>
    </alternativeName>
</protein>
<evidence type="ECO:0000250" key="1">
    <source>
        <dbReference type="UniProtKB" id="P18901"/>
    </source>
</evidence>
<evidence type="ECO:0000250" key="2">
    <source>
        <dbReference type="UniProtKB" id="P21728"/>
    </source>
</evidence>
<evidence type="ECO:0000250" key="3">
    <source>
        <dbReference type="UniProtKB" id="Q61616"/>
    </source>
</evidence>
<evidence type="ECO:0000255" key="4"/>
<evidence type="ECO:0000255" key="5">
    <source>
        <dbReference type="PROSITE-ProRule" id="PRU00521"/>
    </source>
</evidence>
<sequence>MRTLNTSTMEGTGLVAERDFSFRILTACFLSLLILSTLLGNTLVCAAVIRFRHLRSKVTNFFVISLAVSDLLVAVLVMPWKAVAEIAGFWPFGSFCNIWVAFDIMCSTASILNLCVISVDRYWAISSPFRYERKMTPKAAFILISVAWTLSVLISFIPVQLSWHKAKPTGPSEGNATSLGKTINNCDSSLSRTYAISSSLISFYIPVAIMIVTYTRIYRIAQKQIRRISALERAAVHAKNCQTTTGNGNPMECSQPESSFKMSFKRETKVLKTLSVIMGVFVCCWLPFFILNCMVPFCGSGETKPFCIDSITFDVFVWFGWANSSLNPIIYAFNADFRKAFSTLLGCYRLCPTTNNAIETVSINNNGAVVFSSHHEPRGSISKDCNVVYLIPHAVGSSEGLKKEEAVGIAKPLEKLSPALSVILDYDTDVSLEKIQPITQNGQHPT</sequence>